<reference key="1">
    <citation type="journal article" date="2009" name="Genome Res.">
        <title>Comparative genomics of protoploid Saccharomycetaceae.</title>
        <authorList>
            <consortium name="The Genolevures Consortium"/>
            <person name="Souciet J.-L."/>
            <person name="Dujon B."/>
            <person name="Gaillardin C."/>
            <person name="Johnston M."/>
            <person name="Baret P.V."/>
            <person name="Cliften P."/>
            <person name="Sherman D.J."/>
            <person name="Weissenbach J."/>
            <person name="Westhof E."/>
            <person name="Wincker P."/>
            <person name="Jubin C."/>
            <person name="Poulain J."/>
            <person name="Barbe V."/>
            <person name="Segurens B."/>
            <person name="Artiguenave F."/>
            <person name="Anthouard V."/>
            <person name="Vacherie B."/>
            <person name="Val M.-E."/>
            <person name="Fulton R.S."/>
            <person name="Minx P."/>
            <person name="Wilson R."/>
            <person name="Durrens P."/>
            <person name="Jean G."/>
            <person name="Marck C."/>
            <person name="Martin T."/>
            <person name="Nikolski M."/>
            <person name="Rolland T."/>
            <person name="Seret M.-L."/>
            <person name="Casaregola S."/>
            <person name="Despons L."/>
            <person name="Fairhead C."/>
            <person name="Fischer G."/>
            <person name="Lafontaine I."/>
            <person name="Leh V."/>
            <person name="Lemaire M."/>
            <person name="de Montigny J."/>
            <person name="Neuveglise C."/>
            <person name="Thierry A."/>
            <person name="Blanc-Lenfle I."/>
            <person name="Bleykasten C."/>
            <person name="Diffels J."/>
            <person name="Fritsch E."/>
            <person name="Frangeul L."/>
            <person name="Goeffon A."/>
            <person name="Jauniaux N."/>
            <person name="Kachouri-Lafond R."/>
            <person name="Payen C."/>
            <person name="Potier S."/>
            <person name="Pribylova L."/>
            <person name="Ozanne C."/>
            <person name="Richard G.-F."/>
            <person name="Sacerdot C."/>
            <person name="Straub M.-L."/>
            <person name="Talla E."/>
        </authorList>
    </citation>
    <scope>NUCLEOTIDE SEQUENCE [LARGE SCALE GENOMIC DNA]</scope>
    <source>
        <strain>ATCC 2623 / CBS 732 / BCRC 21506 / NBRC 1130 / NCYC 568 / NRRL Y-229</strain>
    </source>
</reference>
<keyword id="KW-0496">Mitochondrion</keyword>
<keyword id="KW-1185">Reference proteome</keyword>
<feature type="chain" id="PRO_0000405473" description="Required for respiratory growth protein 8, mitochondrial">
    <location>
        <begin position="1"/>
        <end position="280"/>
    </location>
</feature>
<evidence type="ECO:0000250" key="1"/>
<evidence type="ECO:0000305" key="2"/>
<dbReference type="EMBL" id="CU928175">
    <property type="protein sequence ID" value="CAR27261.1"/>
    <property type="molecule type" value="Genomic_DNA"/>
</dbReference>
<dbReference type="RefSeq" id="XP_002496194.1">
    <property type="nucleotide sequence ID" value="XM_002496149.1"/>
</dbReference>
<dbReference type="FunCoup" id="C5DU00">
    <property type="interactions" value="39"/>
</dbReference>
<dbReference type="STRING" id="559307.C5DU00"/>
<dbReference type="GeneID" id="8203413"/>
<dbReference type="KEGG" id="zro:ZYRO0C12650g"/>
<dbReference type="HOGENOM" id="CLU_090059_0_0_1"/>
<dbReference type="InParanoid" id="C5DU00"/>
<dbReference type="Proteomes" id="UP000008536">
    <property type="component" value="Chromosome C"/>
</dbReference>
<dbReference type="GO" id="GO:0005739">
    <property type="term" value="C:mitochondrion"/>
    <property type="evidence" value="ECO:0007669"/>
    <property type="project" value="UniProtKB-SubCell"/>
</dbReference>
<dbReference type="GO" id="GO:0000002">
    <property type="term" value="P:mitochondrial genome maintenance"/>
    <property type="evidence" value="ECO:0007669"/>
    <property type="project" value="InterPro"/>
</dbReference>
<dbReference type="InterPro" id="IPR031415">
    <property type="entry name" value="Rrg8"/>
</dbReference>
<dbReference type="Pfam" id="PF17068">
    <property type="entry name" value="RRG8"/>
    <property type="match status" value="1"/>
</dbReference>
<proteinExistence type="inferred from homology"/>
<comment type="function">
    <text evidence="1">Required for respiratory activity and maintenance and expression of the mitochondrial genome.</text>
</comment>
<comment type="subcellular location">
    <subcellularLocation>
        <location evidence="1">Mitochondrion</location>
    </subcellularLocation>
</comment>
<comment type="similarity">
    <text evidence="2">Belongs to the RRG8 family.</text>
</comment>
<name>RRG8_ZYGRC</name>
<organism>
    <name type="scientific">Zygosaccharomyces rouxii (strain ATCC 2623 / CBS 732 / NBRC 1130 / NCYC 568 / NRRL Y-229)</name>
    <dbReference type="NCBI Taxonomy" id="559307"/>
    <lineage>
        <taxon>Eukaryota</taxon>
        <taxon>Fungi</taxon>
        <taxon>Dikarya</taxon>
        <taxon>Ascomycota</taxon>
        <taxon>Saccharomycotina</taxon>
        <taxon>Saccharomycetes</taxon>
        <taxon>Saccharomycetales</taxon>
        <taxon>Saccharomycetaceae</taxon>
        <taxon>Zygosaccharomyces</taxon>
    </lineage>
</organism>
<protein>
    <recommendedName>
        <fullName>Required for respiratory growth protein 8, mitochondrial</fullName>
    </recommendedName>
</protein>
<accession>C5DU00</accession>
<gene>
    <name type="primary">RRG8</name>
    <name type="ordered locus">ZYRO0C12650g</name>
</gene>
<sequence length="280" mass="32338">MPMISDGFYKNLLINRVRHSTRVPILPRVPDLTTPLVTKFEKWSGKRRKLFFQNESQIHSYGIKDFELSNNLFAQLLSSPMRSERNCKTKMPKEFLMQLKLSSTQNNDSSKSLGLAPVVQHSKLNKNSYVVNSRDILSQQISSSTKWVPIAALTSQMRFFQMQDVAIDKSNFLNKYEEMLNSLLRDRLISASASKLEPQDGDVIVRFDKDGNRPIEIGQCKSIGNKEVKAILTNLKYIGPTWEQLINEHRNHEEGIVIRFSENEEAVKLLYKMLAYHYTH</sequence>